<feature type="chain" id="PRO_0000095912" description="Translation initiation factor IF-1">
    <location>
        <begin position="1"/>
        <end position="72"/>
    </location>
</feature>
<feature type="domain" description="S1-like" evidence="1">
    <location>
        <begin position="1"/>
        <end position="72"/>
    </location>
</feature>
<keyword id="KW-0963">Cytoplasm</keyword>
<keyword id="KW-0396">Initiation factor</keyword>
<keyword id="KW-0648">Protein biosynthesis</keyword>
<keyword id="KW-1185">Reference proteome</keyword>
<keyword id="KW-0694">RNA-binding</keyword>
<keyword id="KW-0699">rRNA-binding</keyword>
<organism>
    <name type="scientific">Xylella fastidiosa (strain Temecula1 / ATCC 700964)</name>
    <dbReference type="NCBI Taxonomy" id="183190"/>
    <lineage>
        <taxon>Bacteria</taxon>
        <taxon>Pseudomonadati</taxon>
        <taxon>Pseudomonadota</taxon>
        <taxon>Gammaproteobacteria</taxon>
        <taxon>Lysobacterales</taxon>
        <taxon>Lysobacteraceae</taxon>
        <taxon>Xylella</taxon>
    </lineage>
</organism>
<evidence type="ECO:0000255" key="1">
    <source>
        <dbReference type="HAMAP-Rule" id="MF_00075"/>
    </source>
</evidence>
<sequence>MSKDDCIEFEGTVSETLPNTTFRIKLESGHEVTAHISGRMRKNYIRILTGDRVKIEMTAYDLTKGRIIYRMK</sequence>
<gene>
    <name evidence="1" type="primary">infA</name>
    <name type="ordered locus">PD_0666</name>
</gene>
<reference key="1">
    <citation type="journal article" date="2003" name="J. Bacteriol.">
        <title>Comparative analyses of the complete genome sequences of Pierce's disease and citrus variegated chlorosis strains of Xylella fastidiosa.</title>
        <authorList>
            <person name="Van Sluys M.A."/>
            <person name="de Oliveira M.C."/>
            <person name="Monteiro-Vitorello C.B."/>
            <person name="Miyaki C.Y."/>
            <person name="Furlan L.R."/>
            <person name="Camargo L.E.A."/>
            <person name="da Silva A.C.R."/>
            <person name="Moon D.H."/>
            <person name="Takita M.A."/>
            <person name="Lemos E.G.M."/>
            <person name="Machado M.A."/>
            <person name="Ferro M.I.T."/>
            <person name="da Silva F.R."/>
            <person name="Goldman M.H.S."/>
            <person name="Goldman G.H."/>
            <person name="Lemos M.V.F."/>
            <person name="El-Dorry H."/>
            <person name="Tsai S.M."/>
            <person name="Carrer H."/>
            <person name="Carraro D.M."/>
            <person name="de Oliveira R.C."/>
            <person name="Nunes L.R."/>
            <person name="Siqueira W.J."/>
            <person name="Coutinho L.L."/>
            <person name="Kimura E.T."/>
            <person name="Ferro E.S."/>
            <person name="Harakava R."/>
            <person name="Kuramae E.E."/>
            <person name="Marino C.L."/>
            <person name="Giglioti E."/>
            <person name="Abreu I.L."/>
            <person name="Alves L.M.C."/>
            <person name="do Amaral A.M."/>
            <person name="Baia G.S."/>
            <person name="Blanco S.R."/>
            <person name="Brito M.S."/>
            <person name="Cannavan F.S."/>
            <person name="Celestino A.V."/>
            <person name="da Cunha A.F."/>
            <person name="Fenille R.C."/>
            <person name="Ferro J.A."/>
            <person name="Formighieri E.F."/>
            <person name="Kishi L.T."/>
            <person name="Leoni S.G."/>
            <person name="Oliveira A.R."/>
            <person name="Rosa V.E. Jr."/>
            <person name="Sassaki F.T."/>
            <person name="Sena J.A.D."/>
            <person name="de Souza A.A."/>
            <person name="Truffi D."/>
            <person name="Tsukumo F."/>
            <person name="Yanai G.M."/>
            <person name="Zaros L.G."/>
            <person name="Civerolo E.L."/>
            <person name="Simpson A.J.G."/>
            <person name="Almeida N.F. Jr."/>
            <person name="Setubal J.C."/>
            <person name="Kitajima J.P."/>
        </authorList>
    </citation>
    <scope>NUCLEOTIDE SEQUENCE [LARGE SCALE GENOMIC DNA]</scope>
    <source>
        <strain>Temecula1 / ATCC 700964</strain>
    </source>
</reference>
<comment type="function">
    <text evidence="1">One of the essential components for the initiation of protein synthesis. Stabilizes the binding of IF-2 and IF-3 on the 30S subunit to which N-formylmethionyl-tRNA(fMet) subsequently binds. Helps modulate mRNA selection, yielding the 30S pre-initiation complex (PIC). Upon addition of the 50S ribosomal subunit IF-1, IF-2 and IF-3 are released leaving the mature 70S translation initiation complex.</text>
</comment>
<comment type="subunit">
    <text evidence="1">Component of the 30S ribosomal translation pre-initiation complex which assembles on the 30S ribosome in the order IF-2 and IF-3, IF-1 and N-formylmethionyl-tRNA(fMet); mRNA recruitment can occur at any time during PIC assembly.</text>
</comment>
<comment type="subcellular location">
    <subcellularLocation>
        <location evidence="1">Cytoplasm</location>
    </subcellularLocation>
</comment>
<comment type="similarity">
    <text evidence="1">Belongs to the IF-1 family.</text>
</comment>
<accession>Q87DL6</accession>
<name>IF1_XYLFT</name>
<protein>
    <recommendedName>
        <fullName evidence="1">Translation initiation factor IF-1</fullName>
    </recommendedName>
</protein>
<dbReference type="EMBL" id="AE009442">
    <property type="protein sequence ID" value="AAO28537.1"/>
    <property type="molecule type" value="Genomic_DNA"/>
</dbReference>
<dbReference type="RefSeq" id="WP_004083749.1">
    <property type="nucleotide sequence ID" value="NC_004556.1"/>
</dbReference>
<dbReference type="SMR" id="Q87DL6"/>
<dbReference type="GeneID" id="93904444"/>
<dbReference type="KEGG" id="xft:PD_0666"/>
<dbReference type="HOGENOM" id="CLU_151267_1_0_6"/>
<dbReference type="Proteomes" id="UP000002516">
    <property type="component" value="Chromosome"/>
</dbReference>
<dbReference type="GO" id="GO:0005829">
    <property type="term" value="C:cytosol"/>
    <property type="evidence" value="ECO:0007669"/>
    <property type="project" value="TreeGrafter"/>
</dbReference>
<dbReference type="GO" id="GO:0043022">
    <property type="term" value="F:ribosome binding"/>
    <property type="evidence" value="ECO:0007669"/>
    <property type="project" value="UniProtKB-UniRule"/>
</dbReference>
<dbReference type="GO" id="GO:0019843">
    <property type="term" value="F:rRNA binding"/>
    <property type="evidence" value="ECO:0007669"/>
    <property type="project" value="UniProtKB-UniRule"/>
</dbReference>
<dbReference type="GO" id="GO:0003743">
    <property type="term" value="F:translation initiation factor activity"/>
    <property type="evidence" value="ECO:0007669"/>
    <property type="project" value="UniProtKB-UniRule"/>
</dbReference>
<dbReference type="CDD" id="cd04451">
    <property type="entry name" value="S1_IF1"/>
    <property type="match status" value="1"/>
</dbReference>
<dbReference type="FunFam" id="2.40.50.140:FF:000002">
    <property type="entry name" value="Translation initiation factor IF-1"/>
    <property type="match status" value="1"/>
</dbReference>
<dbReference type="Gene3D" id="2.40.50.140">
    <property type="entry name" value="Nucleic acid-binding proteins"/>
    <property type="match status" value="1"/>
</dbReference>
<dbReference type="HAMAP" id="MF_00075">
    <property type="entry name" value="IF_1"/>
    <property type="match status" value="1"/>
</dbReference>
<dbReference type="InterPro" id="IPR012340">
    <property type="entry name" value="NA-bd_OB-fold"/>
</dbReference>
<dbReference type="InterPro" id="IPR006196">
    <property type="entry name" value="RNA-binding_domain_S1_IF1"/>
</dbReference>
<dbReference type="InterPro" id="IPR003029">
    <property type="entry name" value="S1_domain"/>
</dbReference>
<dbReference type="InterPro" id="IPR004368">
    <property type="entry name" value="TIF_IF1"/>
</dbReference>
<dbReference type="NCBIfam" id="TIGR00008">
    <property type="entry name" value="infA"/>
    <property type="match status" value="1"/>
</dbReference>
<dbReference type="PANTHER" id="PTHR33370">
    <property type="entry name" value="TRANSLATION INITIATION FACTOR IF-1, CHLOROPLASTIC"/>
    <property type="match status" value="1"/>
</dbReference>
<dbReference type="PANTHER" id="PTHR33370:SF1">
    <property type="entry name" value="TRANSLATION INITIATION FACTOR IF-1, CHLOROPLASTIC"/>
    <property type="match status" value="1"/>
</dbReference>
<dbReference type="Pfam" id="PF01176">
    <property type="entry name" value="eIF-1a"/>
    <property type="match status" value="1"/>
</dbReference>
<dbReference type="SMART" id="SM00316">
    <property type="entry name" value="S1"/>
    <property type="match status" value="1"/>
</dbReference>
<dbReference type="SUPFAM" id="SSF50249">
    <property type="entry name" value="Nucleic acid-binding proteins"/>
    <property type="match status" value="1"/>
</dbReference>
<dbReference type="PROSITE" id="PS50832">
    <property type="entry name" value="S1_IF1_TYPE"/>
    <property type="match status" value="1"/>
</dbReference>
<proteinExistence type="inferred from homology"/>